<feature type="chain" id="PRO_1000149319" description="2-isopropylmalate synthase">
    <location>
        <begin position="1"/>
        <end position="513"/>
    </location>
</feature>
<feature type="domain" description="Pyruvate carboxyltransferase" evidence="1">
    <location>
        <begin position="4"/>
        <end position="268"/>
    </location>
</feature>
<feature type="region of interest" description="Regulatory domain" evidence="1">
    <location>
        <begin position="392"/>
        <end position="513"/>
    </location>
</feature>
<feature type="binding site" evidence="1">
    <location>
        <position position="13"/>
    </location>
    <ligand>
        <name>Mn(2+)</name>
        <dbReference type="ChEBI" id="CHEBI:29035"/>
    </ligand>
</feature>
<feature type="binding site" evidence="1">
    <location>
        <position position="203"/>
    </location>
    <ligand>
        <name>Mn(2+)</name>
        <dbReference type="ChEBI" id="CHEBI:29035"/>
    </ligand>
</feature>
<feature type="binding site" evidence="1">
    <location>
        <position position="205"/>
    </location>
    <ligand>
        <name>Mn(2+)</name>
        <dbReference type="ChEBI" id="CHEBI:29035"/>
    </ligand>
</feature>
<feature type="binding site" evidence="1">
    <location>
        <position position="239"/>
    </location>
    <ligand>
        <name>Mn(2+)</name>
        <dbReference type="ChEBI" id="CHEBI:29035"/>
    </ligand>
</feature>
<evidence type="ECO:0000255" key="1">
    <source>
        <dbReference type="HAMAP-Rule" id="MF_01025"/>
    </source>
</evidence>
<sequence length="513" mass="56878">MRRIKIFDTTLRDGEQSPGASMSVEEKVEMALMLEDLGVDLIEAGFPVSSPVQFEAVKRVAEAVQRPIVVGLARCVEKDIDAAYEALKDRPKDKRMIHVFIATSPIHRKYKLRMEKEEILERVRKYVTYARQFFDLVEFSAEDASRTEVPFLIEVYRTAIESGATTINVPDTVGYALPDEFGELIRTLKEGVPGIENVDLSVHCHNDLGLAVANSIAAVQNGATQVEVTLNGIGERAGNCALEEFVMALKVRKDRLPYETGIRTELIYPASRLLTHITGLIPARNKPIVGENVFLHESGIHQDGVLKHRETYEIMKPSDIGRSSETLVLGRHSGKHALRKKLESYGIKLDDETFQKVFEKFTELADRKKEVYDDDLFSIVSEVLKEPLNGYRLVHFHVHTGNTLLPTAAVVLQVGNEKKEAAETGNGPVDAIFKAIDKALGLQPKLEEYIIQAVGTGKNAQGEVKLTLKIDGELYSGRGVSTDIVEASAIAYINAINKYLIAKGLLRKNGGVE</sequence>
<organism>
    <name type="scientific">Thermotoga neapolitana (strain ATCC 49049 / DSM 4359 / NBRC 107923 / NS-E)</name>
    <dbReference type="NCBI Taxonomy" id="309803"/>
    <lineage>
        <taxon>Bacteria</taxon>
        <taxon>Thermotogati</taxon>
        <taxon>Thermotogota</taxon>
        <taxon>Thermotogae</taxon>
        <taxon>Thermotogales</taxon>
        <taxon>Thermotogaceae</taxon>
        <taxon>Thermotoga</taxon>
    </lineage>
</organism>
<dbReference type="EC" id="2.3.3.13" evidence="1"/>
<dbReference type="EMBL" id="CP000916">
    <property type="protein sequence ID" value="ACM22291.1"/>
    <property type="molecule type" value="Genomic_DNA"/>
</dbReference>
<dbReference type="RefSeq" id="WP_012645001.1">
    <property type="nucleotide sequence ID" value="NC_011978.1"/>
</dbReference>
<dbReference type="SMR" id="B9KB95"/>
<dbReference type="STRING" id="309803.CTN_0115"/>
<dbReference type="KEGG" id="tna:CTN_0115"/>
<dbReference type="eggNOG" id="COG0119">
    <property type="taxonomic scope" value="Bacteria"/>
</dbReference>
<dbReference type="HOGENOM" id="CLU_022158_0_1_0"/>
<dbReference type="UniPathway" id="UPA00048">
    <property type="reaction ID" value="UER00070"/>
</dbReference>
<dbReference type="Proteomes" id="UP000000445">
    <property type="component" value="Chromosome"/>
</dbReference>
<dbReference type="GO" id="GO:0005737">
    <property type="term" value="C:cytoplasm"/>
    <property type="evidence" value="ECO:0007669"/>
    <property type="project" value="UniProtKB-SubCell"/>
</dbReference>
<dbReference type="GO" id="GO:0003852">
    <property type="term" value="F:2-isopropylmalate synthase activity"/>
    <property type="evidence" value="ECO:0007669"/>
    <property type="project" value="UniProtKB-UniRule"/>
</dbReference>
<dbReference type="GO" id="GO:0003985">
    <property type="term" value="F:acetyl-CoA C-acetyltransferase activity"/>
    <property type="evidence" value="ECO:0007669"/>
    <property type="project" value="UniProtKB-UniRule"/>
</dbReference>
<dbReference type="GO" id="GO:0030145">
    <property type="term" value="F:manganese ion binding"/>
    <property type="evidence" value="ECO:0007669"/>
    <property type="project" value="UniProtKB-UniRule"/>
</dbReference>
<dbReference type="GO" id="GO:0009098">
    <property type="term" value="P:L-leucine biosynthetic process"/>
    <property type="evidence" value="ECO:0007669"/>
    <property type="project" value="UniProtKB-UniRule"/>
</dbReference>
<dbReference type="CDD" id="cd07940">
    <property type="entry name" value="DRE_TIM_IPMS"/>
    <property type="match status" value="1"/>
</dbReference>
<dbReference type="FunFam" id="1.10.238.260:FF:000001">
    <property type="entry name" value="2-isopropylmalate synthase"/>
    <property type="match status" value="1"/>
</dbReference>
<dbReference type="FunFam" id="3.20.20.70:FF:000010">
    <property type="entry name" value="2-isopropylmalate synthase"/>
    <property type="match status" value="1"/>
</dbReference>
<dbReference type="FunFam" id="3.30.160.270:FF:000001">
    <property type="entry name" value="2-isopropylmalate synthase"/>
    <property type="match status" value="1"/>
</dbReference>
<dbReference type="Gene3D" id="1.10.238.260">
    <property type="match status" value="1"/>
</dbReference>
<dbReference type="Gene3D" id="3.30.160.270">
    <property type="match status" value="1"/>
</dbReference>
<dbReference type="Gene3D" id="3.20.20.70">
    <property type="entry name" value="Aldolase class I"/>
    <property type="match status" value="1"/>
</dbReference>
<dbReference type="HAMAP" id="MF_01025">
    <property type="entry name" value="LeuA_type1"/>
    <property type="match status" value="1"/>
</dbReference>
<dbReference type="InterPro" id="IPR050073">
    <property type="entry name" value="2-IPM_HCS-like"/>
</dbReference>
<dbReference type="InterPro" id="IPR013709">
    <property type="entry name" value="2-isopropylmalate_synth_dimer"/>
</dbReference>
<dbReference type="InterPro" id="IPR002034">
    <property type="entry name" value="AIPM/Hcit_synth_CS"/>
</dbReference>
<dbReference type="InterPro" id="IPR013785">
    <property type="entry name" value="Aldolase_TIM"/>
</dbReference>
<dbReference type="InterPro" id="IPR054691">
    <property type="entry name" value="LeuA/HCS_post-cat"/>
</dbReference>
<dbReference type="InterPro" id="IPR036230">
    <property type="entry name" value="LeuA_allosteric_dom_sf"/>
</dbReference>
<dbReference type="InterPro" id="IPR005671">
    <property type="entry name" value="LeuA_bact_synth"/>
</dbReference>
<dbReference type="InterPro" id="IPR000891">
    <property type="entry name" value="PYR_CT"/>
</dbReference>
<dbReference type="NCBIfam" id="TIGR00973">
    <property type="entry name" value="leuA_bact"/>
    <property type="match status" value="1"/>
</dbReference>
<dbReference type="NCBIfam" id="NF002085">
    <property type="entry name" value="PRK00915.1-2"/>
    <property type="match status" value="1"/>
</dbReference>
<dbReference type="NCBIfam" id="NF002086">
    <property type="entry name" value="PRK00915.1-3"/>
    <property type="match status" value="1"/>
</dbReference>
<dbReference type="PANTHER" id="PTHR10277:SF9">
    <property type="entry name" value="2-ISOPROPYLMALATE SYNTHASE 1, CHLOROPLASTIC-RELATED"/>
    <property type="match status" value="1"/>
</dbReference>
<dbReference type="PANTHER" id="PTHR10277">
    <property type="entry name" value="HOMOCITRATE SYNTHASE-RELATED"/>
    <property type="match status" value="1"/>
</dbReference>
<dbReference type="Pfam" id="PF22617">
    <property type="entry name" value="HCS_D2"/>
    <property type="match status" value="1"/>
</dbReference>
<dbReference type="Pfam" id="PF00682">
    <property type="entry name" value="HMGL-like"/>
    <property type="match status" value="1"/>
</dbReference>
<dbReference type="Pfam" id="PF08502">
    <property type="entry name" value="LeuA_dimer"/>
    <property type="match status" value="1"/>
</dbReference>
<dbReference type="SMART" id="SM00917">
    <property type="entry name" value="LeuA_dimer"/>
    <property type="match status" value="1"/>
</dbReference>
<dbReference type="SUPFAM" id="SSF110921">
    <property type="entry name" value="2-isopropylmalate synthase LeuA, allosteric (dimerisation) domain"/>
    <property type="match status" value="1"/>
</dbReference>
<dbReference type="SUPFAM" id="SSF51569">
    <property type="entry name" value="Aldolase"/>
    <property type="match status" value="1"/>
</dbReference>
<dbReference type="PROSITE" id="PS00815">
    <property type="entry name" value="AIPM_HOMOCIT_SYNTH_1"/>
    <property type="match status" value="1"/>
</dbReference>
<dbReference type="PROSITE" id="PS00816">
    <property type="entry name" value="AIPM_HOMOCIT_SYNTH_2"/>
    <property type="match status" value="1"/>
</dbReference>
<dbReference type="PROSITE" id="PS50991">
    <property type="entry name" value="PYR_CT"/>
    <property type="match status" value="1"/>
</dbReference>
<reference key="1">
    <citation type="submission" date="2007-11" db="EMBL/GenBank/DDBJ databases">
        <title>The genome sequence of the hyperthermophilic bacterium Thermotoga neapolitana.</title>
        <authorList>
            <person name="Lim S.K."/>
            <person name="Kim J.S."/>
            <person name="Cha S.H."/>
            <person name="Park B.C."/>
            <person name="Lee D.S."/>
            <person name="Tae H.S."/>
            <person name="Kim S.-J."/>
            <person name="Kim J.J."/>
            <person name="Park K.J."/>
            <person name="Lee S.Y."/>
        </authorList>
    </citation>
    <scope>NUCLEOTIDE SEQUENCE [LARGE SCALE GENOMIC DNA]</scope>
    <source>
        <strain>ATCC 49049 / DSM 4359 / NBRC 107923 / NS-E</strain>
    </source>
</reference>
<proteinExistence type="inferred from homology"/>
<name>LEU1_THENN</name>
<accession>B9KB95</accession>
<comment type="function">
    <text evidence="1">Catalyzes the condensation of the acetyl group of acetyl-CoA with 3-methyl-2-oxobutanoate (2-ketoisovalerate) to form 3-carboxy-3-hydroxy-4-methylpentanoate (2-isopropylmalate).</text>
</comment>
<comment type="catalytic activity">
    <reaction evidence="1">
        <text>3-methyl-2-oxobutanoate + acetyl-CoA + H2O = (2S)-2-isopropylmalate + CoA + H(+)</text>
        <dbReference type="Rhea" id="RHEA:21524"/>
        <dbReference type="ChEBI" id="CHEBI:1178"/>
        <dbReference type="ChEBI" id="CHEBI:11851"/>
        <dbReference type="ChEBI" id="CHEBI:15377"/>
        <dbReference type="ChEBI" id="CHEBI:15378"/>
        <dbReference type="ChEBI" id="CHEBI:57287"/>
        <dbReference type="ChEBI" id="CHEBI:57288"/>
        <dbReference type="EC" id="2.3.3.13"/>
    </reaction>
</comment>
<comment type="cofactor">
    <cofactor evidence="1">
        <name>Mn(2+)</name>
        <dbReference type="ChEBI" id="CHEBI:29035"/>
    </cofactor>
</comment>
<comment type="pathway">
    <text evidence="1">Amino-acid biosynthesis; L-leucine biosynthesis; L-leucine from 3-methyl-2-oxobutanoate: step 1/4.</text>
</comment>
<comment type="subunit">
    <text evidence="1">Homodimer.</text>
</comment>
<comment type="subcellular location">
    <subcellularLocation>
        <location evidence="1">Cytoplasm</location>
    </subcellularLocation>
</comment>
<comment type="similarity">
    <text evidence="1">Belongs to the alpha-IPM synthase/homocitrate synthase family. LeuA type 1 subfamily.</text>
</comment>
<protein>
    <recommendedName>
        <fullName evidence="1">2-isopropylmalate synthase</fullName>
        <ecNumber evidence="1">2.3.3.13</ecNumber>
    </recommendedName>
    <alternativeName>
        <fullName evidence="1">Alpha-IPM synthase</fullName>
    </alternativeName>
    <alternativeName>
        <fullName evidence="1">Alpha-isopropylmalate synthase</fullName>
    </alternativeName>
</protein>
<keyword id="KW-0028">Amino-acid biosynthesis</keyword>
<keyword id="KW-0100">Branched-chain amino acid biosynthesis</keyword>
<keyword id="KW-0963">Cytoplasm</keyword>
<keyword id="KW-0432">Leucine biosynthesis</keyword>
<keyword id="KW-0464">Manganese</keyword>
<keyword id="KW-0479">Metal-binding</keyword>
<keyword id="KW-0808">Transferase</keyword>
<gene>
    <name evidence="1" type="primary">leuA</name>
    <name type="ordered locus">CTN_0115</name>
</gene>